<protein>
    <recommendedName>
        <fullName evidence="1">Acetylglutamate kinase</fullName>
        <ecNumber evidence="1">2.7.2.8</ecNumber>
    </recommendedName>
    <alternativeName>
        <fullName evidence="1">N-acetyl-L-glutamate 5-phosphotransferase</fullName>
    </alternativeName>
    <alternativeName>
        <fullName evidence="1">NAG kinase</fullName>
        <shortName evidence="1">NAGK</shortName>
    </alternativeName>
</protein>
<name>ARGB_RHOPS</name>
<reference key="1">
    <citation type="submission" date="2006-03" db="EMBL/GenBank/DDBJ databases">
        <title>Complete sequence of Rhodopseudomonas palustris BisB5.</title>
        <authorList>
            <consortium name="US DOE Joint Genome Institute"/>
            <person name="Copeland A."/>
            <person name="Lucas S."/>
            <person name="Lapidus A."/>
            <person name="Barry K."/>
            <person name="Detter J.C."/>
            <person name="Glavina del Rio T."/>
            <person name="Hammon N."/>
            <person name="Israni S."/>
            <person name="Dalin E."/>
            <person name="Tice H."/>
            <person name="Pitluck S."/>
            <person name="Chain P."/>
            <person name="Malfatti S."/>
            <person name="Shin M."/>
            <person name="Vergez L."/>
            <person name="Schmutz J."/>
            <person name="Larimer F."/>
            <person name="Land M."/>
            <person name="Hauser L."/>
            <person name="Pelletier D.A."/>
            <person name="Kyrpides N."/>
            <person name="Lykidis A."/>
            <person name="Oda Y."/>
            <person name="Harwood C.S."/>
            <person name="Richardson P."/>
        </authorList>
    </citation>
    <scope>NUCLEOTIDE SEQUENCE [LARGE SCALE GENOMIC DNA]</scope>
    <source>
        <strain>BisB5</strain>
    </source>
</reference>
<evidence type="ECO:0000255" key="1">
    <source>
        <dbReference type="HAMAP-Rule" id="MF_00082"/>
    </source>
</evidence>
<evidence type="ECO:0000305" key="2"/>
<feature type="chain" id="PRO_0000264748" description="Acetylglutamate kinase">
    <location>
        <begin position="1"/>
        <end position="298"/>
    </location>
</feature>
<feature type="binding site" evidence="1">
    <location>
        <begin position="69"/>
        <end position="70"/>
    </location>
    <ligand>
        <name>substrate</name>
    </ligand>
</feature>
<feature type="binding site" evidence="1">
    <location>
        <position position="91"/>
    </location>
    <ligand>
        <name>substrate</name>
    </ligand>
</feature>
<feature type="binding site" evidence="1">
    <location>
        <position position="196"/>
    </location>
    <ligand>
        <name>substrate</name>
    </ligand>
</feature>
<feature type="site" description="Transition state stabilizer" evidence="1">
    <location>
        <position position="34"/>
    </location>
</feature>
<feature type="site" description="Transition state stabilizer" evidence="1">
    <location>
        <position position="256"/>
    </location>
</feature>
<sequence length="298" mass="31416">MTDAPVISPIDQARILSEALPHMQRYDEETIVIKYGGHAMGAENDAKAFARDIVLLEQTAVNPVVVHGGGPQIATMLKRLGIKSEFAAGLRITDGATIEIVEMVLAGSINKQLVGYINEAGGKAVGLCGKDGNMVTASKATRTMVDPDSRIEEVVDLGFVGEPEKVDLTLLNQLIGHELIPVLAPLATSATGQTFNVNADTFAGAVAGALKAKRLLLLTDVPGVLDKSKQLIPELSIKDARKLIADGTISGGMIPKVETCIYALEQGVEGVVILDGKVPHAVLLELFTNQGTGTLIHK</sequence>
<dbReference type="EC" id="2.7.2.8" evidence="1"/>
<dbReference type="EMBL" id="CP000283">
    <property type="protein sequence ID" value="ABE37312.1"/>
    <property type="status" value="ALT_INIT"/>
    <property type="molecule type" value="Genomic_DNA"/>
</dbReference>
<dbReference type="SMR" id="Q13F27"/>
<dbReference type="STRING" id="316057.RPD_0072"/>
<dbReference type="KEGG" id="rpd:RPD_0072"/>
<dbReference type="eggNOG" id="COG0548">
    <property type="taxonomic scope" value="Bacteria"/>
</dbReference>
<dbReference type="HOGENOM" id="CLU_053680_0_0_5"/>
<dbReference type="BioCyc" id="RPAL316057:RPD_RS00360-MONOMER"/>
<dbReference type="UniPathway" id="UPA00068">
    <property type="reaction ID" value="UER00107"/>
</dbReference>
<dbReference type="Proteomes" id="UP000001818">
    <property type="component" value="Chromosome"/>
</dbReference>
<dbReference type="GO" id="GO:0005737">
    <property type="term" value="C:cytoplasm"/>
    <property type="evidence" value="ECO:0007669"/>
    <property type="project" value="UniProtKB-SubCell"/>
</dbReference>
<dbReference type="GO" id="GO:0003991">
    <property type="term" value="F:acetylglutamate kinase activity"/>
    <property type="evidence" value="ECO:0007669"/>
    <property type="project" value="UniProtKB-UniRule"/>
</dbReference>
<dbReference type="GO" id="GO:0005524">
    <property type="term" value="F:ATP binding"/>
    <property type="evidence" value="ECO:0007669"/>
    <property type="project" value="UniProtKB-UniRule"/>
</dbReference>
<dbReference type="GO" id="GO:0042450">
    <property type="term" value="P:arginine biosynthetic process via ornithine"/>
    <property type="evidence" value="ECO:0007669"/>
    <property type="project" value="UniProtKB-UniRule"/>
</dbReference>
<dbReference type="GO" id="GO:0006526">
    <property type="term" value="P:L-arginine biosynthetic process"/>
    <property type="evidence" value="ECO:0007669"/>
    <property type="project" value="UniProtKB-UniPathway"/>
</dbReference>
<dbReference type="CDD" id="cd04250">
    <property type="entry name" value="AAK_NAGK-C"/>
    <property type="match status" value="1"/>
</dbReference>
<dbReference type="FunFam" id="3.40.1160.10:FF:000004">
    <property type="entry name" value="Acetylglutamate kinase"/>
    <property type="match status" value="1"/>
</dbReference>
<dbReference type="Gene3D" id="3.40.1160.10">
    <property type="entry name" value="Acetylglutamate kinase-like"/>
    <property type="match status" value="1"/>
</dbReference>
<dbReference type="HAMAP" id="MF_00082">
    <property type="entry name" value="ArgB"/>
    <property type="match status" value="1"/>
</dbReference>
<dbReference type="InterPro" id="IPR036393">
    <property type="entry name" value="AceGlu_kinase-like_sf"/>
</dbReference>
<dbReference type="InterPro" id="IPR004662">
    <property type="entry name" value="AcgluKinase_fam"/>
</dbReference>
<dbReference type="InterPro" id="IPR037528">
    <property type="entry name" value="ArgB"/>
</dbReference>
<dbReference type="InterPro" id="IPR001048">
    <property type="entry name" value="Asp/Glu/Uridylate_kinase"/>
</dbReference>
<dbReference type="InterPro" id="IPR041727">
    <property type="entry name" value="NAGK-C"/>
</dbReference>
<dbReference type="NCBIfam" id="TIGR00761">
    <property type="entry name" value="argB"/>
    <property type="match status" value="1"/>
</dbReference>
<dbReference type="PANTHER" id="PTHR23342">
    <property type="entry name" value="N-ACETYLGLUTAMATE SYNTHASE"/>
    <property type="match status" value="1"/>
</dbReference>
<dbReference type="PANTHER" id="PTHR23342:SF0">
    <property type="entry name" value="N-ACETYLGLUTAMATE SYNTHASE, MITOCHONDRIAL"/>
    <property type="match status" value="1"/>
</dbReference>
<dbReference type="Pfam" id="PF00696">
    <property type="entry name" value="AA_kinase"/>
    <property type="match status" value="1"/>
</dbReference>
<dbReference type="PIRSF" id="PIRSF000728">
    <property type="entry name" value="NAGK"/>
    <property type="match status" value="1"/>
</dbReference>
<dbReference type="SUPFAM" id="SSF53633">
    <property type="entry name" value="Carbamate kinase-like"/>
    <property type="match status" value="1"/>
</dbReference>
<comment type="function">
    <text evidence="1">Catalyzes the ATP-dependent phosphorylation of N-acetyl-L-glutamate.</text>
</comment>
<comment type="catalytic activity">
    <reaction evidence="1">
        <text>N-acetyl-L-glutamate + ATP = N-acetyl-L-glutamyl 5-phosphate + ADP</text>
        <dbReference type="Rhea" id="RHEA:14629"/>
        <dbReference type="ChEBI" id="CHEBI:30616"/>
        <dbReference type="ChEBI" id="CHEBI:44337"/>
        <dbReference type="ChEBI" id="CHEBI:57936"/>
        <dbReference type="ChEBI" id="CHEBI:456216"/>
        <dbReference type="EC" id="2.7.2.8"/>
    </reaction>
</comment>
<comment type="pathway">
    <text evidence="1">Amino-acid biosynthesis; L-arginine biosynthesis; N(2)-acetyl-L-ornithine from L-glutamate: step 2/4.</text>
</comment>
<comment type="subcellular location">
    <subcellularLocation>
        <location evidence="1">Cytoplasm</location>
    </subcellularLocation>
</comment>
<comment type="similarity">
    <text evidence="1">Belongs to the acetylglutamate kinase family. ArgB subfamily.</text>
</comment>
<comment type="sequence caution" evidence="2">
    <conflict type="erroneous initiation">
        <sequence resource="EMBL-CDS" id="ABE37312"/>
    </conflict>
</comment>
<gene>
    <name evidence="1" type="primary">argB</name>
    <name type="ordered locus">RPD_0072</name>
</gene>
<accession>Q13F27</accession>
<proteinExistence type="inferred from homology"/>
<keyword id="KW-0028">Amino-acid biosynthesis</keyword>
<keyword id="KW-0055">Arginine biosynthesis</keyword>
<keyword id="KW-0067">ATP-binding</keyword>
<keyword id="KW-0963">Cytoplasm</keyword>
<keyword id="KW-0418">Kinase</keyword>
<keyword id="KW-0547">Nucleotide-binding</keyword>
<keyword id="KW-0808">Transferase</keyword>
<organism>
    <name type="scientific">Rhodopseudomonas palustris (strain BisB5)</name>
    <dbReference type="NCBI Taxonomy" id="316057"/>
    <lineage>
        <taxon>Bacteria</taxon>
        <taxon>Pseudomonadati</taxon>
        <taxon>Pseudomonadota</taxon>
        <taxon>Alphaproteobacteria</taxon>
        <taxon>Hyphomicrobiales</taxon>
        <taxon>Nitrobacteraceae</taxon>
        <taxon>Rhodopseudomonas</taxon>
    </lineage>
</organism>